<sequence>MSEAGEATTGGTTLPQAAADAPAAAPPDPAPKSPAASGAPQAPAPAALLAGSPGGDAAPGPAPASSAPAGGEDAEKKVLATKVLGTVKWFNVRNGYGFINRNDTKEDVFVHQTAIKKNNPRKYLRSVGDGETVEFDVVEGEKGAEAANVTGPDGVPVEGSRYAADRRRYRRGYYGRRRGPPRNYAGEEEEEGSGSSEGFEPPAADGQFSGARNQLRRPQYRPPYRQRRFPPYHVGQTFDRRSRVFPHPNRMQAGEIGEMKDGVPEGTQLQAHRNPTYRPRFRRGPARPRPAPAIGEAEDKENQQAANGPNQPSARRGFRRPYNYRRRSRPLNAVSQDGKETKAGEAPTENPAPATEQSSAE</sequence>
<comment type="function">
    <text evidence="1 7">Binds to the GM-CSF promoter. Seems to act as a repressor (By similarity). Also binds to full-length mRNA and to short RNA sequences containing the consensus site 5'-UCCAUCA-3'. May have a role in translation repression.</text>
</comment>
<comment type="subunit">
    <text evidence="2 5">Found in a mRNP complex with YBX2 (PubMed:10772793). Interacts with RRP1B (By similarity).</text>
</comment>
<comment type="subcellular location">
    <subcellularLocation>
        <location evidence="5">Cytoplasm</location>
    </subcellularLocation>
    <subcellularLocation>
        <location evidence="1">Nucleus</location>
    </subcellularLocation>
</comment>
<comment type="alternative products">
    <event type="alternative splicing"/>
    <isoform>
        <id>Q9JKB3-1</id>
        <name>1</name>
        <name>Msy3l</name>
        <sequence type="displayed"/>
    </isoform>
    <isoform>
        <id>Q9JKB3-2</id>
        <name>2</name>
        <name>Msy3s</name>
        <sequence type="described" ref="VSP_013051"/>
    </isoform>
</comment>
<comment type="tissue specificity">
    <text evidence="5 6 7">Expressed in oocytes, spermatocytes and spermatids (at protein level). Expressed in skeletal muscle, kidney, brain, spleen, liver, heart and spermatids. Isoform 2 is preferentially expressed in somatic tissues (PubMed:10956549).</text>
</comment>
<comment type="miscellaneous">
    <text>Transgenic mice overexpressing Ybx3 exhibit disruption of the normal completion of spermatogenesis, dominant sterility and abnormal translation activation of repressed mRNA.</text>
</comment>
<proteinExistence type="evidence at protein level"/>
<gene>
    <name type="primary">Ybx3</name>
    <name type="synonym">Csda</name>
    <name type="synonym">Msy4</name>
</gene>
<accession>Q9JKB3</accession>
<accession>Q80WG4</accession>
<accession>Q9EQF7</accession>
<accession>Q9EQF8</accession>
<name>YBOX3_MOUSE</name>
<feature type="initiator methionine" description="Removed" evidence="2">
    <location>
        <position position="1"/>
    </location>
</feature>
<feature type="chain" id="PRO_0000100215" description="Y-box-binding protein 3">
    <location>
        <begin position="2"/>
        <end position="361"/>
    </location>
</feature>
<feature type="domain" description="CSD">
    <location>
        <begin position="82"/>
        <end position="152"/>
    </location>
</feature>
<feature type="region of interest" description="Disordered" evidence="4">
    <location>
        <begin position="1"/>
        <end position="74"/>
    </location>
</feature>
<feature type="region of interest" description="Disordered" evidence="4">
    <location>
        <begin position="173"/>
        <end position="361"/>
    </location>
</feature>
<feature type="compositionally biased region" description="Low complexity" evidence="4">
    <location>
        <begin position="1"/>
        <end position="23"/>
    </location>
</feature>
<feature type="compositionally biased region" description="Low complexity" evidence="4">
    <location>
        <begin position="33"/>
        <end position="71"/>
    </location>
</feature>
<feature type="compositionally biased region" description="Basic residues" evidence="4">
    <location>
        <begin position="214"/>
        <end position="230"/>
    </location>
</feature>
<feature type="compositionally biased region" description="Polar residues" evidence="4">
    <location>
        <begin position="303"/>
        <end position="313"/>
    </location>
</feature>
<feature type="compositionally biased region" description="Basic residues" evidence="4">
    <location>
        <begin position="316"/>
        <end position="329"/>
    </location>
</feature>
<feature type="modified residue" description="N-acetylserine" evidence="2">
    <location>
        <position position="2"/>
    </location>
</feature>
<feature type="modified residue" description="Phosphoserine" evidence="2">
    <location>
        <position position="2"/>
    </location>
</feature>
<feature type="modified residue" description="Phosphoserine" evidence="11">
    <location>
        <position position="33"/>
    </location>
</feature>
<feature type="modified residue" description="Phosphoserine" evidence="11">
    <location>
        <position position="52"/>
    </location>
</feature>
<feature type="modified residue" description="Phosphoserine" evidence="2">
    <location>
        <position position="126"/>
    </location>
</feature>
<feature type="modified residue" description="Phosphoserine" evidence="2">
    <location>
        <position position="193"/>
    </location>
</feature>
<feature type="modified residue" description="Phosphoserine" evidence="11">
    <location>
        <position position="195"/>
    </location>
</feature>
<feature type="modified residue" description="Phosphoserine" evidence="2">
    <location>
        <position position="196"/>
    </location>
</feature>
<feature type="modified residue" description="Omega-N-methylarginine" evidence="2">
    <location>
        <position position="243"/>
    </location>
</feature>
<feature type="modified residue" description="Phosphoserine" evidence="2">
    <location>
        <position position="313"/>
    </location>
</feature>
<feature type="modified residue" description="Omega-N-methylarginine" evidence="12">
    <location>
        <position position="315"/>
    </location>
</feature>
<feature type="modified residue" description="Phosphoserine" evidence="3">
    <location>
        <position position="335"/>
    </location>
</feature>
<feature type="modified residue" description="Phosphoserine" evidence="3">
    <location>
        <position position="358"/>
    </location>
</feature>
<feature type="modified residue" description="Phosphoserine" evidence="3">
    <location>
        <position position="359"/>
    </location>
</feature>
<feature type="splice variant" id="VSP_013051" description="In isoform 2." evidence="8 9">
    <location>
        <begin position="184"/>
        <end position="252"/>
    </location>
</feature>
<feature type="sequence conflict" description="In Ref. 2; AAG14418." evidence="10" ref="2">
    <original>T</original>
    <variation>N</variation>
    <location>
        <position position="237"/>
    </location>
</feature>
<feature type="sequence conflict" description="In Ref. 1; AAF61741." evidence="10" ref="1">
    <original>A</original>
    <variation>G</variation>
    <location>
        <position position="306"/>
    </location>
</feature>
<feature type="sequence conflict" description="In Ref. 1; AAF61741." evidence="10" ref="1">
    <original>E</original>
    <variation>A</variation>
    <location>
        <position position="349"/>
    </location>
</feature>
<keyword id="KW-0007">Acetylation</keyword>
<keyword id="KW-0025">Alternative splicing</keyword>
<keyword id="KW-0963">Cytoplasm</keyword>
<keyword id="KW-0238">DNA-binding</keyword>
<keyword id="KW-0488">Methylation</keyword>
<keyword id="KW-0539">Nucleus</keyword>
<keyword id="KW-0597">Phosphoprotein</keyword>
<keyword id="KW-1185">Reference proteome</keyword>
<keyword id="KW-0678">Repressor</keyword>
<keyword id="KW-0694">RNA-binding</keyword>
<keyword id="KW-0804">Transcription</keyword>
<keyword id="KW-0805">Transcription regulation</keyword>
<dbReference type="EMBL" id="AF246224">
    <property type="protein sequence ID" value="AAF61741.1"/>
    <property type="molecule type" value="mRNA"/>
</dbReference>
<dbReference type="EMBL" id="AF248546">
    <property type="protein sequence ID" value="AAG14418.1"/>
    <property type="molecule type" value="mRNA"/>
</dbReference>
<dbReference type="EMBL" id="AF248547">
    <property type="protein sequence ID" value="AAG14419.1"/>
    <property type="molecule type" value="mRNA"/>
</dbReference>
<dbReference type="EMBL" id="BC048242">
    <property type="protein sequence ID" value="AAH48242.1"/>
    <property type="molecule type" value="mRNA"/>
</dbReference>
<dbReference type="EMBL" id="BC062377">
    <property type="protein sequence ID" value="AAH62377.1"/>
    <property type="molecule type" value="mRNA"/>
</dbReference>
<dbReference type="CCDS" id="CCDS20605.1">
    <molecule id="Q9JKB3-2"/>
</dbReference>
<dbReference type="CCDS" id="CCDS20606.1">
    <molecule id="Q9JKB3-1"/>
</dbReference>
<dbReference type="RefSeq" id="NP_035863.1">
    <molecule id="Q9JKB3-2"/>
    <property type="nucleotide sequence ID" value="NM_011733.2"/>
</dbReference>
<dbReference type="RefSeq" id="NP_620817.2">
    <molecule id="Q9JKB3-1"/>
    <property type="nucleotide sequence ID" value="NM_139117.2"/>
</dbReference>
<dbReference type="SMR" id="Q9JKB3"/>
<dbReference type="BioGRID" id="207989">
    <property type="interactions" value="15"/>
</dbReference>
<dbReference type="CORUM" id="Q9JKB3"/>
<dbReference type="DIP" id="DIP-42746N"/>
<dbReference type="FunCoup" id="Q9JKB3">
    <property type="interactions" value="636"/>
</dbReference>
<dbReference type="IntAct" id="Q9JKB3">
    <property type="interactions" value="9"/>
</dbReference>
<dbReference type="MINT" id="Q9JKB3"/>
<dbReference type="STRING" id="10090.ENSMUSP00000032309"/>
<dbReference type="GlyGen" id="Q9JKB3">
    <property type="glycosylation" value="1 site, 1 O-linked glycan (1 site)"/>
</dbReference>
<dbReference type="iPTMnet" id="Q9JKB3"/>
<dbReference type="PhosphoSitePlus" id="Q9JKB3"/>
<dbReference type="SwissPalm" id="Q9JKB3"/>
<dbReference type="jPOST" id="Q9JKB3"/>
<dbReference type="PaxDb" id="10090-ENSMUSP00000032309"/>
<dbReference type="PeptideAtlas" id="Q9JKB3"/>
<dbReference type="ProteomicsDB" id="299609">
    <molecule id="Q9JKB3-1"/>
</dbReference>
<dbReference type="ProteomicsDB" id="299610">
    <molecule id="Q9JKB3-2"/>
</dbReference>
<dbReference type="Pumba" id="Q9JKB3"/>
<dbReference type="Antibodypedia" id="11792">
    <property type="antibodies" value="244 antibodies from 24 providers"/>
</dbReference>
<dbReference type="DNASU" id="56449"/>
<dbReference type="Ensembl" id="ENSMUST00000032309.13">
    <molecule id="Q9JKB3-1"/>
    <property type="protein sequence ID" value="ENSMUSP00000032309.7"/>
    <property type="gene ID" value="ENSMUSG00000030189.16"/>
</dbReference>
<dbReference type="Ensembl" id="ENSMUST00000087865.4">
    <molecule id="Q9JKB3-2"/>
    <property type="protein sequence ID" value="ENSMUSP00000085172.3"/>
    <property type="gene ID" value="ENSMUSG00000030189.16"/>
</dbReference>
<dbReference type="GeneID" id="56449"/>
<dbReference type="KEGG" id="mmu:56449"/>
<dbReference type="UCSC" id="uc009eis.1">
    <molecule id="Q9JKB3-1"/>
    <property type="organism name" value="mouse"/>
</dbReference>
<dbReference type="UCSC" id="uc009eit.1">
    <molecule id="Q9JKB3-2"/>
    <property type="organism name" value="mouse"/>
</dbReference>
<dbReference type="AGR" id="MGI:2137670"/>
<dbReference type="CTD" id="8531"/>
<dbReference type="MGI" id="MGI:2137670">
    <property type="gene designation" value="Ybx3"/>
</dbReference>
<dbReference type="VEuPathDB" id="HostDB:ENSMUSG00000030189"/>
<dbReference type="eggNOG" id="KOG3070">
    <property type="taxonomic scope" value="Eukaryota"/>
</dbReference>
<dbReference type="GeneTree" id="ENSGT00940000159340"/>
<dbReference type="HOGENOM" id="CLU_063071_2_0_1"/>
<dbReference type="InParanoid" id="Q9JKB3"/>
<dbReference type="OMA" id="FYPQFRQ"/>
<dbReference type="OrthoDB" id="203339at2759"/>
<dbReference type="PhylomeDB" id="Q9JKB3"/>
<dbReference type="TreeFam" id="TF317306"/>
<dbReference type="BioGRID-ORCS" id="56449">
    <property type="hits" value="0 hits in 79 CRISPR screens"/>
</dbReference>
<dbReference type="ChiTaRS" id="Ybx3">
    <property type="organism name" value="mouse"/>
</dbReference>
<dbReference type="PRO" id="PR:Q9JKB3"/>
<dbReference type="Proteomes" id="UP000000589">
    <property type="component" value="Chromosome 6"/>
</dbReference>
<dbReference type="RNAct" id="Q9JKB3">
    <property type="molecule type" value="protein"/>
</dbReference>
<dbReference type="Bgee" id="ENSMUSG00000030189">
    <property type="expression patterns" value="Expressed in seminiferous tubule of testis and 267 other cell types or tissues"/>
</dbReference>
<dbReference type="GO" id="GO:0005737">
    <property type="term" value="C:cytoplasm"/>
    <property type="evidence" value="ECO:0000314"/>
    <property type="project" value="MGI"/>
</dbReference>
<dbReference type="GO" id="GO:0005829">
    <property type="term" value="C:cytosol"/>
    <property type="evidence" value="ECO:0007669"/>
    <property type="project" value="Ensembl"/>
</dbReference>
<dbReference type="GO" id="GO:0005921">
    <property type="term" value="C:gap junction"/>
    <property type="evidence" value="ECO:0000266"/>
    <property type="project" value="MGI"/>
</dbReference>
<dbReference type="GO" id="GO:0005634">
    <property type="term" value="C:nucleus"/>
    <property type="evidence" value="ECO:0000314"/>
    <property type="project" value="MGI"/>
</dbReference>
<dbReference type="GO" id="GO:0045202">
    <property type="term" value="C:synapse"/>
    <property type="evidence" value="ECO:0000314"/>
    <property type="project" value="SynGO"/>
</dbReference>
<dbReference type="GO" id="GO:0003677">
    <property type="term" value="F:DNA binding"/>
    <property type="evidence" value="ECO:0000314"/>
    <property type="project" value="MGI"/>
</dbReference>
<dbReference type="GO" id="GO:0003730">
    <property type="term" value="F:mRNA 3'-UTR binding"/>
    <property type="evidence" value="ECO:0000314"/>
    <property type="project" value="MGI"/>
</dbReference>
<dbReference type="GO" id="GO:0043021">
    <property type="term" value="F:ribonucleoprotein complex binding"/>
    <property type="evidence" value="ECO:0000314"/>
    <property type="project" value="MGI"/>
</dbReference>
<dbReference type="GO" id="GO:0003723">
    <property type="term" value="F:RNA binding"/>
    <property type="evidence" value="ECO:0000314"/>
    <property type="project" value="MGI"/>
</dbReference>
<dbReference type="GO" id="GO:0000977">
    <property type="term" value="F:RNA polymerase II transcription regulatory region sequence-specific DNA binding"/>
    <property type="evidence" value="ECO:0000314"/>
    <property type="project" value="NTNU_SB"/>
</dbReference>
<dbReference type="GO" id="GO:0003697">
    <property type="term" value="F:single-stranded DNA binding"/>
    <property type="evidence" value="ECO:0000314"/>
    <property type="project" value="MGI"/>
</dbReference>
<dbReference type="GO" id="GO:0006915">
    <property type="term" value="P:apoptotic process"/>
    <property type="evidence" value="ECO:0000315"/>
    <property type="project" value="MGI"/>
</dbReference>
<dbReference type="GO" id="GO:0071474">
    <property type="term" value="P:cellular hyperosmotic response"/>
    <property type="evidence" value="ECO:0007669"/>
    <property type="project" value="Ensembl"/>
</dbReference>
<dbReference type="GO" id="GO:0071356">
    <property type="term" value="P:cellular response to tumor necrosis factor"/>
    <property type="evidence" value="ECO:0007669"/>
    <property type="project" value="Ensembl"/>
</dbReference>
<dbReference type="GO" id="GO:0035234">
    <property type="term" value="P:ectopic germ cell programmed cell death"/>
    <property type="evidence" value="ECO:0000315"/>
    <property type="project" value="MGI"/>
</dbReference>
<dbReference type="GO" id="GO:0009566">
    <property type="term" value="P:fertilization"/>
    <property type="evidence" value="ECO:0000315"/>
    <property type="project" value="MGI"/>
</dbReference>
<dbReference type="GO" id="GO:0001701">
    <property type="term" value="P:in utero embryonic development"/>
    <property type="evidence" value="ECO:0000316"/>
    <property type="project" value="MGI"/>
</dbReference>
<dbReference type="GO" id="GO:0008584">
    <property type="term" value="P:male gonad development"/>
    <property type="evidence" value="ECO:0000315"/>
    <property type="project" value="MGI"/>
</dbReference>
<dbReference type="GO" id="GO:0043066">
    <property type="term" value="P:negative regulation of apoptotic process"/>
    <property type="evidence" value="ECO:0000315"/>
    <property type="project" value="MGI"/>
</dbReference>
<dbReference type="GO" id="GO:0051093">
    <property type="term" value="P:negative regulation of developmental process"/>
    <property type="evidence" value="ECO:0000315"/>
    <property type="project" value="MGI"/>
</dbReference>
<dbReference type="GO" id="GO:1902219">
    <property type="term" value="P:negative regulation of intrinsic apoptotic signaling pathway in response to osmotic stress"/>
    <property type="evidence" value="ECO:0007669"/>
    <property type="project" value="Ensembl"/>
</dbReference>
<dbReference type="GO" id="GO:0060546">
    <property type="term" value="P:negative regulation of necroptotic process"/>
    <property type="evidence" value="ECO:0007669"/>
    <property type="project" value="Ensembl"/>
</dbReference>
<dbReference type="GO" id="GO:2000242">
    <property type="term" value="P:negative regulation of reproductive process"/>
    <property type="evidence" value="ECO:0000315"/>
    <property type="project" value="MGI"/>
</dbReference>
<dbReference type="GO" id="GO:0048642">
    <property type="term" value="P:negative regulation of skeletal muscle tissue development"/>
    <property type="evidence" value="ECO:0000314"/>
    <property type="project" value="MGI"/>
</dbReference>
<dbReference type="GO" id="GO:0000122">
    <property type="term" value="P:negative regulation of transcription by RNA polymerase II"/>
    <property type="evidence" value="ECO:0000314"/>
    <property type="project" value="NTNU_SB"/>
</dbReference>
<dbReference type="GO" id="GO:0046622">
    <property type="term" value="P:positive regulation of organ growth"/>
    <property type="evidence" value="ECO:0000315"/>
    <property type="project" value="MGI"/>
</dbReference>
<dbReference type="GO" id="GO:0007283">
    <property type="term" value="P:spermatogenesis"/>
    <property type="evidence" value="ECO:0000315"/>
    <property type="project" value="MGI"/>
</dbReference>
<dbReference type="CDD" id="cd04458">
    <property type="entry name" value="CSP_CDS"/>
    <property type="match status" value="1"/>
</dbReference>
<dbReference type="FunFam" id="2.40.50.140:FF:000054">
    <property type="entry name" value="Nuclease-sensitive element-binding protein 1"/>
    <property type="match status" value="1"/>
</dbReference>
<dbReference type="Gene3D" id="2.40.50.140">
    <property type="entry name" value="Nucleic acid-binding proteins"/>
    <property type="match status" value="1"/>
</dbReference>
<dbReference type="InterPro" id="IPR050181">
    <property type="entry name" value="Cold_shock_domain"/>
</dbReference>
<dbReference type="InterPro" id="IPR011129">
    <property type="entry name" value="CSD"/>
</dbReference>
<dbReference type="InterPro" id="IPR019844">
    <property type="entry name" value="CSD_CS"/>
</dbReference>
<dbReference type="InterPro" id="IPR002059">
    <property type="entry name" value="CSP_DNA-bd"/>
</dbReference>
<dbReference type="InterPro" id="IPR012340">
    <property type="entry name" value="NA-bd_OB-fold"/>
</dbReference>
<dbReference type="PANTHER" id="PTHR11544">
    <property type="entry name" value="COLD SHOCK DOMAIN CONTAINING PROTEINS"/>
    <property type="match status" value="1"/>
</dbReference>
<dbReference type="Pfam" id="PF00313">
    <property type="entry name" value="CSD"/>
    <property type="match status" value="1"/>
</dbReference>
<dbReference type="PRINTS" id="PR00050">
    <property type="entry name" value="COLDSHOCK"/>
</dbReference>
<dbReference type="SMART" id="SM00357">
    <property type="entry name" value="CSP"/>
    <property type="match status" value="1"/>
</dbReference>
<dbReference type="SUPFAM" id="SSF50249">
    <property type="entry name" value="Nucleic acid-binding proteins"/>
    <property type="match status" value="1"/>
</dbReference>
<dbReference type="PROSITE" id="PS00352">
    <property type="entry name" value="CSD_1"/>
    <property type="match status" value="1"/>
</dbReference>
<dbReference type="PROSITE" id="PS51857">
    <property type="entry name" value="CSD_2"/>
    <property type="match status" value="1"/>
</dbReference>
<organism>
    <name type="scientific">Mus musculus</name>
    <name type="common">Mouse</name>
    <dbReference type="NCBI Taxonomy" id="10090"/>
    <lineage>
        <taxon>Eukaryota</taxon>
        <taxon>Metazoa</taxon>
        <taxon>Chordata</taxon>
        <taxon>Craniata</taxon>
        <taxon>Vertebrata</taxon>
        <taxon>Euteleostomi</taxon>
        <taxon>Mammalia</taxon>
        <taxon>Eutheria</taxon>
        <taxon>Euarchontoglires</taxon>
        <taxon>Glires</taxon>
        <taxon>Rodentia</taxon>
        <taxon>Myomorpha</taxon>
        <taxon>Muroidea</taxon>
        <taxon>Muridae</taxon>
        <taxon>Murinae</taxon>
        <taxon>Mus</taxon>
        <taxon>Mus</taxon>
    </lineage>
</organism>
<protein>
    <recommendedName>
        <fullName>Y-box-binding protein 3</fullName>
    </recommendedName>
    <alternativeName>
        <fullName>Cold shock domain-containing protein A</fullName>
    </alternativeName>
    <alternativeName>
        <fullName>DNA-binding protein A</fullName>
    </alternativeName>
    <alternativeName>
        <fullName>Y-box protein 3</fullName>
    </alternativeName>
</protein>
<evidence type="ECO:0000250" key="1"/>
<evidence type="ECO:0000250" key="2">
    <source>
        <dbReference type="UniProtKB" id="P16989"/>
    </source>
</evidence>
<evidence type="ECO:0000250" key="3">
    <source>
        <dbReference type="UniProtKB" id="Q62764"/>
    </source>
</evidence>
<evidence type="ECO:0000256" key="4">
    <source>
        <dbReference type="SAM" id="MobiDB-lite"/>
    </source>
</evidence>
<evidence type="ECO:0000269" key="5">
    <source>
    </source>
</evidence>
<evidence type="ECO:0000269" key="6">
    <source>
    </source>
</evidence>
<evidence type="ECO:0000269" key="7">
    <source>
    </source>
</evidence>
<evidence type="ECO:0000303" key="8">
    <source>
    </source>
</evidence>
<evidence type="ECO:0000303" key="9">
    <source>
    </source>
</evidence>
<evidence type="ECO:0000305" key="10"/>
<evidence type="ECO:0007744" key="11">
    <source>
    </source>
</evidence>
<evidence type="ECO:0007744" key="12">
    <source>
    </source>
</evidence>
<reference key="1">
    <citation type="journal article" date="2000" name="Dev. Biol.">
        <title>A sequence-specific RNA binding complex expressed in murine germ cells contains MSY2 and MSY4.</title>
        <authorList>
            <person name="Davies H.G."/>
            <person name="Giorgini F."/>
            <person name="Fajardo M.A."/>
            <person name="Braun R.E."/>
        </authorList>
    </citation>
    <scope>NUCLEOTIDE SEQUENCE [MRNA] (ISOFORM 1)</scope>
    <scope>IDENTIFICATION IN A MRNP COMPLEX WITH YBX2</scope>
    <scope>RNA-BINDING</scope>
    <scope>SUBCELLULAR LOCATION</scope>
    <scope>TISSUE SPECIFICITY</scope>
    <source>
        <tissue>Testis</tissue>
    </source>
</reference>
<reference key="2">
    <citation type="journal article" date="2000" name="Mol. Hum. Reprod.">
        <title>Developmental expression of Y-box protein 1 mRNA and alternatively spliced Y-box protein 3 mRNAs in spermatogenic cells in mice.</title>
        <authorList>
            <person name="Mastrangelo M.-A."/>
            <person name="Kleene K.C."/>
        </authorList>
    </citation>
    <scope>NUCLEOTIDE SEQUENCE [MRNA] (ISOFORMS 1 AND 2)</scope>
    <scope>TISSUE SPECIFICITY</scope>
    <source>
        <strain>CD-1</strain>
        <tissue>Testis</tissue>
    </source>
</reference>
<reference key="3">
    <citation type="journal article" date="2004" name="Genome Res.">
        <title>The status, quality, and expansion of the NIH full-length cDNA project: the Mammalian Gene Collection (MGC).</title>
        <authorList>
            <consortium name="The MGC Project Team"/>
        </authorList>
    </citation>
    <scope>NUCLEOTIDE SEQUENCE [LARGE SCALE MRNA] (ISOFORMS 1 AND 2)</scope>
    <source>
        <strain>FVB/N</strain>
        <tissue>Colon</tissue>
        <tissue>Eye</tissue>
    </source>
</reference>
<reference key="4">
    <citation type="journal article" date="2001" name="Mol. Cell. Biol.">
        <title>MSY2 and MSY4 bind a conserved sequence in the 3' untranslated region of protamine 1 mRNA in vitro and in vivo.</title>
        <authorList>
            <person name="Giorgini F."/>
            <person name="Davies H.G."/>
            <person name="Braun R.E."/>
        </authorList>
    </citation>
    <scope>RNA-BINDING</scope>
</reference>
<reference key="5">
    <citation type="journal article" date="2002" name="Development">
        <title>Translational repression by MSY4 inhibits spermatid differentiation in mice.</title>
        <authorList>
            <person name="Giorgini F."/>
            <person name="Davies H.G."/>
            <person name="Braun R.E."/>
        </authorList>
    </citation>
    <scope>FUNCTION IN TRANSLATIONAL REPRESSION</scope>
    <scope>TISSUE SPECIFICITY</scope>
</reference>
<reference key="6">
    <citation type="journal article" date="2010" name="Cell">
        <title>A tissue-specific atlas of mouse protein phosphorylation and expression.</title>
        <authorList>
            <person name="Huttlin E.L."/>
            <person name="Jedrychowski M.P."/>
            <person name="Elias J.E."/>
            <person name="Goswami T."/>
            <person name="Rad R."/>
            <person name="Beausoleil S.A."/>
            <person name="Villen J."/>
            <person name="Haas W."/>
            <person name="Sowa M.E."/>
            <person name="Gygi S.P."/>
        </authorList>
    </citation>
    <scope>PHOSPHORYLATION [LARGE SCALE ANALYSIS] AT SER-33; SER-52 AND SER-195</scope>
    <scope>IDENTIFICATION BY MASS SPECTROMETRY [LARGE SCALE ANALYSIS]</scope>
    <source>
        <tissue>Brown adipose tissue</tissue>
        <tissue>Heart</tissue>
        <tissue>Kidney</tissue>
        <tissue>Liver</tissue>
        <tissue>Lung</tissue>
        <tissue>Pancreas</tissue>
        <tissue>Spleen</tissue>
        <tissue>Testis</tissue>
    </source>
</reference>
<reference key="7">
    <citation type="journal article" date="2014" name="Mol. Cell. Proteomics">
        <title>Immunoaffinity enrichment and mass spectrometry analysis of protein methylation.</title>
        <authorList>
            <person name="Guo A."/>
            <person name="Gu H."/>
            <person name="Zhou J."/>
            <person name="Mulhern D."/>
            <person name="Wang Y."/>
            <person name="Lee K.A."/>
            <person name="Yang V."/>
            <person name="Aguiar M."/>
            <person name="Kornhauser J."/>
            <person name="Jia X."/>
            <person name="Ren J."/>
            <person name="Beausoleil S.A."/>
            <person name="Silva J.C."/>
            <person name="Vemulapalli V."/>
            <person name="Bedford M.T."/>
            <person name="Comb M.J."/>
        </authorList>
    </citation>
    <scope>METHYLATION [LARGE SCALE ANALYSIS] AT ARG-315</scope>
    <scope>IDENTIFICATION BY MASS SPECTROMETRY [LARGE SCALE ANALYSIS]</scope>
    <source>
        <tissue>Brain</tissue>
        <tissue>Embryo</tissue>
    </source>
</reference>